<proteinExistence type="evidence at protein level"/>
<comment type="function">
    <text evidence="3 4 5">Involved in the catabolism of purine nucleotides. Can use (S)-ureidoglycolate as substrate, but not (R)-ureidoglycolate or allantoate. The sequential activity of AAH, UGLYAH and UAH allows a complete purine breakdown without the intermediate generation of urea.</text>
</comment>
<comment type="catalytic activity">
    <reaction evidence="3 5">
        <text>(S)-ureidoglycolate + H2O + 2 H(+) = glyoxylate + 2 NH4(+) + CO2</text>
        <dbReference type="Rhea" id="RHEA:19809"/>
        <dbReference type="ChEBI" id="CHEBI:15377"/>
        <dbReference type="ChEBI" id="CHEBI:15378"/>
        <dbReference type="ChEBI" id="CHEBI:16526"/>
        <dbReference type="ChEBI" id="CHEBI:28938"/>
        <dbReference type="ChEBI" id="CHEBI:36655"/>
        <dbReference type="ChEBI" id="CHEBI:57296"/>
        <dbReference type="EC" id="3.5.1.116"/>
    </reaction>
</comment>
<comment type="cofactor">
    <cofactor evidence="5">
        <name>Mn(2+)</name>
        <dbReference type="ChEBI" id="CHEBI:29035"/>
    </cofactor>
    <cofactor evidence="5">
        <name>Ni(2+)</name>
        <dbReference type="ChEBI" id="CHEBI:49786"/>
    </cofactor>
    <cofactor evidence="5">
        <name>Co(2+)</name>
        <dbReference type="ChEBI" id="CHEBI:48828"/>
    </cofactor>
    <text evidence="5">Binds 2 manganese ions per subunit. Can also use nickel and cobalt with lower activity.</text>
</comment>
<comment type="biophysicochemical properties">
    <kinetics>
        <KM evidence="3">38.7 uM for (S)-ureidoglycolate</KM>
        <KM evidence="5">11.3 uM for (S)-ureidoglycolate (at pH 8.5 and 30 degrees Celsius)</KM>
        <text evidence="3 5">kcat is 1.43 sec(-1) with (S)-ureidoglycolate as substrate (at pH 8.5 and 30 degrees Celsius) (PubMed:25020232). kcat is 7.9 sec(-1) for (S)-ureidoglycolate (PubMed:19935661).</text>
    </kinetics>
</comment>
<comment type="pathway">
    <text evidence="3 5">Nitrogen metabolism; (S)-allantoin degradation; glyoxylate from (S)-ureidoglycolate: step 1/1.</text>
</comment>
<comment type="subunit">
    <text evidence="5">Homodimer.</text>
</comment>
<comment type="subcellular location">
    <subcellularLocation>
        <location evidence="9">Endoplasmic reticulum</location>
    </subcellularLocation>
</comment>
<comment type="disruption phenotype">
    <text evidence="4">No visible phenotype under normal growth conditions, but mutant plants show a slight reduction of growth on a medium containing allantoin as the sole nitrogen source and accumulate ureidoglycolate.</text>
</comment>
<comment type="similarity">
    <text evidence="8">Belongs to the peptidase M20 family.</text>
</comment>
<comment type="sequence caution" evidence="8">
    <conflict type="erroneous initiation">
        <sequence resource="EMBL-CDS" id="BAB11623"/>
    </conflict>
    <text>Truncated N-terminus.</text>
</comment>
<gene>
    <name evidence="7" type="primary">UAH</name>
    <name evidence="6" type="synonym">AAH2</name>
    <name evidence="10" type="ordered locus">At5g43600</name>
    <name evidence="11" type="ORF">K9D7.10</name>
</gene>
<accession>Q8VXY9</accession>
<accession>Q9FIY0</accession>
<protein>
    <recommendedName>
        <fullName evidence="7">Ureidoglycolate hydrolase</fullName>
        <shortName evidence="7">AtUAH</shortName>
        <ecNumber evidence="3 5">3.5.1.116</ecNumber>
    </recommendedName>
    <alternativeName>
        <fullName evidence="6">Allantoate amidohydrolase 2</fullName>
        <shortName evidence="6">AtAHH2</shortName>
    </alternativeName>
    <alternativeName>
        <fullName evidence="7">Ureidoglycolate amidohydrolase</fullName>
    </alternativeName>
</protein>
<reference key="1">
    <citation type="journal article" date="1998" name="DNA Res.">
        <title>Structural analysis of Arabidopsis thaliana chromosome 5. VIII. Sequence features of the regions of 1,081,958 bp covered by seventeen physically assigned P1 and TAC clones.</title>
        <authorList>
            <person name="Asamizu E."/>
            <person name="Sato S."/>
            <person name="Kaneko T."/>
            <person name="Nakamura Y."/>
            <person name="Kotani H."/>
            <person name="Miyajima N."/>
            <person name="Tabata S."/>
        </authorList>
    </citation>
    <scope>NUCLEOTIDE SEQUENCE [LARGE SCALE GENOMIC DNA]</scope>
    <source>
        <strain>cv. Columbia</strain>
    </source>
</reference>
<reference key="2">
    <citation type="journal article" date="2017" name="Plant J.">
        <title>Araport11: a complete reannotation of the Arabidopsis thaliana reference genome.</title>
        <authorList>
            <person name="Cheng C.Y."/>
            <person name="Krishnakumar V."/>
            <person name="Chan A.P."/>
            <person name="Thibaud-Nissen F."/>
            <person name="Schobel S."/>
            <person name="Town C.D."/>
        </authorList>
    </citation>
    <scope>GENOME REANNOTATION</scope>
    <source>
        <strain>cv. Columbia</strain>
    </source>
</reference>
<reference key="3">
    <citation type="journal article" date="2003" name="Science">
        <title>Empirical analysis of transcriptional activity in the Arabidopsis genome.</title>
        <authorList>
            <person name="Yamada K."/>
            <person name="Lim J."/>
            <person name="Dale J.M."/>
            <person name="Chen H."/>
            <person name="Shinn P."/>
            <person name="Palm C.J."/>
            <person name="Southwick A.M."/>
            <person name="Wu H.C."/>
            <person name="Kim C.J."/>
            <person name="Nguyen M."/>
            <person name="Pham P.K."/>
            <person name="Cheuk R.F."/>
            <person name="Karlin-Newmann G."/>
            <person name="Liu S.X."/>
            <person name="Lam B."/>
            <person name="Sakano H."/>
            <person name="Wu T."/>
            <person name="Yu G."/>
            <person name="Miranda M."/>
            <person name="Quach H.L."/>
            <person name="Tripp M."/>
            <person name="Chang C.H."/>
            <person name="Lee J.M."/>
            <person name="Toriumi M.J."/>
            <person name="Chan M.M."/>
            <person name="Tang C.C."/>
            <person name="Onodera C.S."/>
            <person name="Deng J.M."/>
            <person name="Akiyama K."/>
            <person name="Ansari Y."/>
            <person name="Arakawa T."/>
            <person name="Banh J."/>
            <person name="Banno F."/>
            <person name="Bowser L."/>
            <person name="Brooks S.Y."/>
            <person name="Carninci P."/>
            <person name="Chao Q."/>
            <person name="Choy N."/>
            <person name="Enju A."/>
            <person name="Goldsmith A.D."/>
            <person name="Gurjal M."/>
            <person name="Hansen N.F."/>
            <person name="Hayashizaki Y."/>
            <person name="Johnson-Hopson C."/>
            <person name="Hsuan V.W."/>
            <person name="Iida K."/>
            <person name="Karnes M."/>
            <person name="Khan S."/>
            <person name="Koesema E."/>
            <person name="Ishida J."/>
            <person name="Jiang P.X."/>
            <person name="Jones T."/>
            <person name="Kawai J."/>
            <person name="Kamiya A."/>
            <person name="Meyers C."/>
            <person name="Nakajima M."/>
            <person name="Narusaka M."/>
            <person name="Seki M."/>
            <person name="Sakurai T."/>
            <person name="Satou M."/>
            <person name="Tamse R."/>
            <person name="Vaysberg M."/>
            <person name="Wallender E.K."/>
            <person name="Wong C."/>
            <person name="Yamamura Y."/>
            <person name="Yuan S."/>
            <person name="Shinozaki K."/>
            <person name="Davis R.W."/>
            <person name="Theologis A."/>
            <person name="Ecker J.R."/>
        </authorList>
    </citation>
    <scope>NUCLEOTIDE SEQUENCE [LARGE SCALE MRNA]</scope>
    <source>
        <strain>cv. Columbia</strain>
    </source>
</reference>
<reference key="4">
    <citation type="submission" date="2006-07" db="EMBL/GenBank/DDBJ databases">
        <title>Large-scale analysis of RIKEN Arabidopsis full-length (RAFL) cDNAs.</title>
        <authorList>
            <person name="Totoki Y."/>
            <person name="Seki M."/>
            <person name="Ishida J."/>
            <person name="Nakajima M."/>
            <person name="Enju A."/>
            <person name="Kamiya A."/>
            <person name="Narusaka M."/>
            <person name="Shin-i T."/>
            <person name="Nakagawa M."/>
            <person name="Sakamoto N."/>
            <person name="Oishi K."/>
            <person name="Kohara Y."/>
            <person name="Kobayashi M."/>
            <person name="Toyoda A."/>
            <person name="Sakaki Y."/>
            <person name="Sakurai T."/>
            <person name="Iida K."/>
            <person name="Akiyama K."/>
            <person name="Satou M."/>
            <person name="Toyoda T."/>
            <person name="Konagaya A."/>
            <person name="Carninci P."/>
            <person name="Kawai J."/>
            <person name="Hayashizaki Y."/>
            <person name="Shinozaki K."/>
        </authorList>
    </citation>
    <scope>NUCLEOTIDE SEQUENCE [LARGE SCALE MRNA]</scope>
    <source>
        <strain>cv. Columbia</strain>
    </source>
</reference>
<reference key="5">
    <citation type="journal article" date="2010" name="Nat. Chem. Biol.">
        <title>Ureide catabolism in Arabidopsis thaliana and Escherichia coli.</title>
        <authorList>
            <person name="Werner A.K."/>
            <person name="Romeis T."/>
            <person name="Witte C.P."/>
        </authorList>
    </citation>
    <scope>FUNCTION</scope>
    <scope>CATALYTIC ACTIVITY</scope>
    <scope>BIOPHYSICOCHEMICAL PROPERTIES</scope>
</reference>
<reference key="6">
    <citation type="journal article" date="2013" name="Plant Physiol.">
        <title>The ureide-degrading reactions of purine ring catabolism employ three amidohydrolases and one aminohydrolase in Arabidopsis, soybean, and rice.</title>
        <authorList>
            <person name="Werner A.K."/>
            <person name="Medina-Escobar N."/>
            <person name="Zulawski M."/>
            <person name="Sparkes I.A."/>
            <person name="Cao F.Q."/>
            <person name="Witte C.P."/>
        </authorList>
    </citation>
    <scope>FUNCTION</scope>
    <scope>SUBCELLULAR LOCATION</scope>
    <scope>DISRUPTION PHENOTYPE</scope>
</reference>
<reference key="7">
    <citation type="journal article" date="2014" name="J. Mol. Biol.">
        <title>Structural insights into the substrate specificity of (s)-ureidoglycolate amidohydrolase and its comparison with allantoate amidohydrolase.</title>
        <authorList>
            <person name="Shin I."/>
            <person name="Han K."/>
            <person name="Rhee S."/>
        </authorList>
    </citation>
    <scope>X-RAY CRYSTALLOGRAPHY (1.45 ANGSTROMS) OF 50-476 IN COMPLEX WITH SUBSTRATES AND MANGANESE</scope>
    <scope>CATALYTIC ACTIVITY</scope>
    <scope>FUNCTION</scope>
    <scope>PATHWAY</scope>
    <scope>BIOPHYSICOCHEMICAL PROPERTIES</scope>
    <scope>SUBUNIT</scope>
    <scope>MUTAGENESIS OF HIS-138; ASP-149; GLU-183; GLU-184; HIS-254; GLN-257; HIS-290; ASN-340; ASP-351; ARG-353; TYR-423; HIS-424 AND HIS-448</scope>
</reference>
<feature type="signal peptide" evidence="2">
    <location>
        <begin position="1"/>
        <end position="25"/>
    </location>
</feature>
<feature type="chain" id="PRO_0000423446" description="Ureidoglycolate hydrolase">
    <location>
        <begin position="26"/>
        <end position="476"/>
    </location>
</feature>
<feature type="region of interest" description="Involved in dimerization" evidence="5">
    <location>
        <begin position="276"/>
        <end position="391"/>
    </location>
</feature>
<feature type="binding site" evidence="5 12 13 14">
    <location>
        <position position="138"/>
    </location>
    <ligand>
        <name>Mn(2+)</name>
        <dbReference type="ChEBI" id="CHEBI:29035"/>
        <label>1</label>
        <note>catalytic</note>
    </ligand>
</feature>
<feature type="binding site" evidence="5 12 13 14">
    <location>
        <position position="149"/>
    </location>
    <ligand>
        <name>Mn(2+)</name>
        <dbReference type="ChEBI" id="CHEBI:29035"/>
        <label>1</label>
        <note>catalytic</note>
    </ligand>
</feature>
<feature type="binding site" evidence="5 12 13 14">
    <location>
        <position position="149"/>
    </location>
    <ligand>
        <name>Mn(2+)</name>
        <dbReference type="ChEBI" id="CHEBI:29035"/>
        <label>2</label>
    </ligand>
</feature>
<feature type="binding site" evidence="5 12 13 14">
    <location>
        <begin position="183"/>
        <end position="184"/>
    </location>
    <ligand>
        <name>substrate</name>
    </ligand>
</feature>
<feature type="binding site" evidence="5 12 13 14">
    <location>
        <position position="184"/>
    </location>
    <ligand>
        <name>Mn(2+)</name>
        <dbReference type="ChEBI" id="CHEBI:29035"/>
        <label>2</label>
    </ligand>
</feature>
<feature type="binding site" evidence="5 12">
    <location>
        <begin position="254"/>
        <end position="257"/>
    </location>
    <ligand>
        <name>substrate</name>
    </ligand>
</feature>
<feature type="binding site" evidence="5 12 13 14">
    <location>
        <position position="254"/>
    </location>
    <ligand>
        <name>Mn(2+)</name>
        <dbReference type="ChEBI" id="CHEBI:29035"/>
        <label>1</label>
        <note>catalytic</note>
    </ligand>
</feature>
<feature type="binding site" evidence="5 12">
    <location>
        <position position="290"/>
    </location>
    <ligand>
        <name>substrate</name>
    </ligand>
</feature>
<feature type="binding site" evidence="5 12 13 14">
    <location>
        <position position="340"/>
    </location>
    <ligand>
        <name>substrate</name>
    </ligand>
</feature>
<feature type="binding site" evidence="5 12 13 14">
    <location>
        <position position="353"/>
    </location>
    <ligand>
        <name>substrate</name>
    </ligand>
</feature>
<feature type="binding site" evidence="5 12 13 14">
    <location>
        <begin position="423"/>
        <end position="424"/>
    </location>
    <ligand>
        <name>substrate</name>
    </ligand>
</feature>
<feature type="binding site" evidence="5 12 13 14">
    <location>
        <position position="448"/>
    </location>
    <ligand>
        <name>Mn(2+)</name>
        <dbReference type="ChEBI" id="CHEBI:29035"/>
        <label>2</label>
    </ligand>
</feature>
<feature type="binding site" evidence="5 12 13">
    <location>
        <position position="448"/>
    </location>
    <ligand>
        <name>substrate</name>
    </ligand>
</feature>
<feature type="site" description="Necessary for dimerization" evidence="1">
    <location>
        <position position="299"/>
    </location>
</feature>
<feature type="mutagenesis site" description="Impaired enzyme activity." evidence="5">
    <original>H</original>
    <variation>A</variation>
    <location>
        <position position="138"/>
    </location>
</feature>
<feature type="mutagenesis site" description="Impaired enzyme activity." evidence="5">
    <original>D</original>
    <variation>A</variation>
    <variation>N</variation>
    <location>
        <position position="149"/>
    </location>
</feature>
<feature type="mutagenesis site" description="Impaired enzyme activity." evidence="5">
    <original>E</original>
    <variation>A</variation>
    <variation>D</variation>
    <variation>Q</variation>
    <location>
        <position position="183"/>
    </location>
</feature>
<feature type="mutagenesis site" description="Impaired enzyme activity." evidence="5">
    <original>E</original>
    <variation>A</variation>
    <location>
        <position position="184"/>
    </location>
</feature>
<feature type="mutagenesis site" description="Impaired enzyme activity." evidence="5">
    <original>H</original>
    <variation>A</variation>
    <location>
        <position position="254"/>
    </location>
</feature>
<feature type="mutagenesis site" description="Impaired enzyme activity." evidence="5">
    <original>Q</original>
    <variation>A</variation>
    <variation>E</variation>
    <location>
        <position position="257"/>
    </location>
</feature>
<feature type="mutagenesis site" description="Strongly reduced substrate affinity and enzyme activity." evidence="5">
    <original>Q</original>
    <variation>N</variation>
    <location>
        <position position="257"/>
    </location>
</feature>
<feature type="mutagenesis site" description="Impaired enzyme activity." evidence="5">
    <original>H</original>
    <variation>A</variation>
    <variation>N</variation>
    <location>
        <position position="290"/>
    </location>
</feature>
<feature type="mutagenesis site" description="Strongly reduced substrate affinity and enzyme activity." evidence="5">
    <original>H</original>
    <variation>Q</variation>
    <location>
        <position position="290"/>
    </location>
</feature>
<feature type="mutagenesis site" description="Strongly reduced substrate affinity and abolished enzyme activity." evidence="5">
    <original>N</original>
    <variation>A</variation>
    <location>
        <position position="340"/>
    </location>
</feature>
<feature type="mutagenesis site" description="Impaired enzyme activity." evidence="5">
    <original>N</original>
    <variation>D</variation>
    <location>
        <position position="340"/>
    </location>
</feature>
<feature type="mutagenesis site" description="Impaired enzyme activity." evidence="5">
    <original>D</original>
    <variation>A</variation>
    <location>
        <position position="351"/>
    </location>
</feature>
<feature type="mutagenesis site" description="Impaired enzyme activity." evidence="5">
    <original>R</original>
    <variation>A</variation>
    <variation>K</variation>
    <location>
        <position position="353"/>
    </location>
</feature>
<feature type="mutagenesis site" description="Impaired enzyme activity." evidence="5">
    <original>Y</original>
    <variation>A</variation>
    <variation>G</variation>
    <location>
        <position position="423"/>
    </location>
</feature>
<feature type="mutagenesis site" description="Reduced substrate affinity and enzyme activity." evidence="5">
    <original>Y</original>
    <variation>F</variation>
    <location>
        <position position="423"/>
    </location>
</feature>
<feature type="mutagenesis site" description="Reduced substrate affinity and enzyme activity." evidence="5">
    <original>H</original>
    <variation>N</variation>
    <location>
        <position position="424"/>
    </location>
</feature>
<feature type="mutagenesis site" description="Impaired enzyme activity." evidence="5">
    <original>H</original>
    <variation>A</variation>
    <location>
        <position position="448"/>
    </location>
</feature>
<feature type="helix" evidence="15">
    <location>
        <begin position="55"/>
        <end position="58"/>
    </location>
</feature>
<feature type="helix" evidence="15">
    <location>
        <begin position="63"/>
        <end position="74"/>
    </location>
</feature>
<feature type="strand" evidence="15">
    <location>
        <begin position="84"/>
        <end position="86"/>
    </location>
</feature>
<feature type="helix" evidence="15">
    <location>
        <begin position="91"/>
        <end position="106"/>
    </location>
</feature>
<feature type="strand" evidence="15">
    <location>
        <begin position="110"/>
        <end position="113"/>
    </location>
</feature>
<feature type="strand" evidence="15">
    <location>
        <begin position="119"/>
        <end position="123"/>
    </location>
</feature>
<feature type="strand" evidence="15">
    <location>
        <begin position="132"/>
        <end position="137"/>
    </location>
</feature>
<feature type="strand" evidence="15">
    <location>
        <begin position="141"/>
        <end position="145"/>
    </location>
</feature>
<feature type="helix" evidence="15">
    <location>
        <begin position="151"/>
        <end position="166"/>
    </location>
</feature>
<feature type="strand" evidence="15">
    <location>
        <begin position="175"/>
        <end position="179"/>
    </location>
</feature>
<feature type="turn" evidence="15">
    <location>
        <begin position="186"/>
        <end position="188"/>
    </location>
</feature>
<feature type="helix" evidence="15">
    <location>
        <begin position="193"/>
        <end position="198"/>
    </location>
</feature>
<feature type="helix" evidence="15">
    <location>
        <begin position="202"/>
        <end position="210"/>
    </location>
</feature>
<feature type="helix" evidence="15">
    <location>
        <begin position="220"/>
        <end position="226"/>
    </location>
</feature>
<feature type="helix" evidence="15">
    <location>
        <begin position="238"/>
        <end position="240"/>
    </location>
</feature>
<feature type="strand" evidence="15">
    <location>
        <begin position="246"/>
        <end position="255"/>
    </location>
</feature>
<feature type="strand" evidence="15">
    <location>
        <begin position="257"/>
        <end position="259"/>
    </location>
</feature>
<feature type="helix" evidence="15">
    <location>
        <begin position="260"/>
        <end position="264"/>
    </location>
</feature>
<feature type="strand" evidence="15">
    <location>
        <begin position="267"/>
        <end position="274"/>
    </location>
</feature>
<feature type="strand" evidence="15">
    <location>
        <begin position="276"/>
        <end position="285"/>
    </location>
</feature>
<feature type="turn" evidence="15">
    <location>
        <begin position="291"/>
        <end position="293"/>
    </location>
</feature>
<feature type="helix" evidence="15">
    <location>
        <begin position="296"/>
        <end position="298"/>
    </location>
</feature>
<feature type="helix" evidence="15">
    <location>
        <begin position="302"/>
        <end position="318"/>
    </location>
</feature>
<feature type="strand" evidence="15">
    <location>
        <begin position="326"/>
        <end position="336"/>
    </location>
</feature>
<feature type="strand" evidence="15">
    <location>
        <begin position="344"/>
        <end position="356"/>
    </location>
</feature>
<feature type="helix" evidence="15">
    <location>
        <begin position="357"/>
        <end position="378"/>
    </location>
</feature>
<feature type="strand" evidence="15">
    <location>
        <begin position="381"/>
        <end position="390"/>
    </location>
</feature>
<feature type="helix" evidence="15">
    <location>
        <begin position="398"/>
        <end position="410"/>
    </location>
</feature>
<feature type="strand" evidence="15">
    <location>
        <begin position="415"/>
        <end position="422"/>
    </location>
</feature>
<feature type="helix" evidence="15">
    <location>
        <begin position="425"/>
        <end position="429"/>
    </location>
</feature>
<feature type="turn" evidence="15">
    <location>
        <begin position="430"/>
        <end position="432"/>
    </location>
</feature>
<feature type="strand" evidence="15">
    <location>
        <begin position="435"/>
        <end position="440"/>
    </location>
</feature>
<feature type="helix" evidence="15">
    <location>
        <begin position="443"/>
        <end position="445"/>
    </location>
</feature>
<feature type="helix" evidence="15">
    <location>
        <begin position="456"/>
        <end position="475"/>
    </location>
</feature>
<sequence length="476" mass="51487">MESLKRFLCSIALLLISLLLPSSLAQQQQHESIRTMEDFSGYPIHEPGQFGSINLASSLSVDAPGLQNQIDELSSFSDAPSPSVTRVLYTDKDVSARRYVKNLMALAGLTVREDAVGNIFGKWDGLEPNLPAVATGSHIDAIPYSGKYDGVVGVLGAIEAINVLKRSGFKPKRSLEIILFTSEEPTRFGISCLGSRLLAGSKELAEALKTTVVDGQNVSFIEAARSAGYAEDKDDDLSSVFLKKGSYFAFLELHIEQGPILEDEGLDIGVVTAIAAPASLKVEFEGNGGHAGAVLMPYRNDAGLAAAELALAVEKHVLESESIDTVGTVGILELHPGAINSIPSKSHLEIDTRDIDEARRNTVIKKIQESANTIAKKRKVKLSEFKIVNQDPPALSDKLVIKKMAEAATELNLSHKMMISRAYHDSLFMARISPMGMIFIPCYKGYSHKPEEYSSPEDMANGVKVLSLTLAKLSLD</sequence>
<organism>
    <name type="scientific">Arabidopsis thaliana</name>
    <name type="common">Mouse-ear cress</name>
    <dbReference type="NCBI Taxonomy" id="3702"/>
    <lineage>
        <taxon>Eukaryota</taxon>
        <taxon>Viridiplantae</taxon>
        <taxon>Streptophyta</taxon>
        <taxon>Embryophyta</taxon>
        <taxon>Tracheophyta</taxon>
        <taxon>Spermatophyta</taxon>
        <taxon>Magnoliopsida</taxon>
        <taxon>eudicotyledons</taxon>
        <taxon>Gunneridae</taxon>
        <taxon>Pentapetalae</taxon>
        <taxon>rosids</taxon>
        <taxon>malvids</taxon>
        <taxon>Brassicales</taxon>
        <taxon>Brassicaceae</taxon>
        <taxon>Camelineae</taxon>
        <taxon>Arabidopsis</taxon>
    </lineage>
</organism>
<dbReference type="EC" id="3.5.1.116" evidence="3 5"/>
<dbReference type="EMBL" id="AB016875">
    <property type="protein sequence ID" value="BAB11623.1"/>
    <property type="status" value="ALT_INIT"/>
    <property type="molecule type" value="Genomic_DNA"/>
</dbReference>
<dbReference type="EMBL" id="CP002688">
    <property type="protein sequence ID" value="AED94986.1"/>
    <property type="molecule type" value="Genomic_DNA"/>
</dbReference>
<dbReference type="EMBL" id="AY074343">
    <property type="protein sequence ID" value="AAL67039.1"/>
    <property type="molecule type" value="mRNA"/>
</dbReference>
<dbReference type="EMBL" id="AY091387">
    <property type="protein sequence ID" value="AAM14326.1"/>
    <property type="molecule type" value="mRNA"/>
</dbReference>
<dbReference type="EMBL" id="AK230338">
    <property type="protein sequence ID" value="BAF02137.1"/>
    <property type="molecule type" value="mRNA"/>
</dbReference>
<dbReference type="RefSeq" id="NP_199173.2">
    <property type="nucleotide sequence ID" value="NM_123726.4"/>
</dbReference>
<dbReference type="PDB" id="4PXB">
    <property type="method" value="X-ray"/>
    <property type="resolution" value="1.90 A"/>
    <property type="chains" value="A/B=50-476"/>
</dbReference>
<dbReference type="PDB" id="4PXC">
    <property type="method" value="X-ray"/>
    <property type="resolution" value="1.89 A"/>
    <property type="chains" value="A/B=50-476"/>
</dbReference>
<dbReference type="PDB" id="4PXE">
    <property type="method" value="X-ray"/>
    <property type="resolution" value="1.45 A"/>
    <property type="chains" value="A/B=50-476"/>
</dbReference>
<dbReference type="PDBsum" id="4PXB"/>
<dbReference type="PDBsum" id="4PXC"/>
<dbReference type="PDBsum" id="4PXE"/>
<dbReference type="SMR" id="Q8VXY9"/>
<dbReference type="BioGRID" id="19630">
    <property type="interactions" value="1"/>
</dbReference>
<dbReference type="FunCoup" id="Q8VXY9">
    <property type="interactions" value="445"/>
</dbReference>
<dbReference type="STRING" id="3702.Q8VXY9"/>
<dbReference type="PaxDb" id="3702-AT5G43600.1"/>
<dbReference type="ProteomicsDB" id="228616"/>
<dbReference type="EnsemblPlants" id="AT5G43600.1">
    <property type="protein sequence ID" value="AT5G43600.1"/>
    <property type="gene ID" value="AT5G43600"/>
</dbReference>
<dbReference type="GeneID" id="834380"/>
<dbReference type="Gramene" id="AT5G43600.1">
    <property type="protein sequence ID" value="AT5G43600.1"/>
    <property type="gene ID" value="AT5G43600"/>
</dbReference>
<dbReference type="KEGG" id="ath:AT5G43600"/>
<dbReference type="Araport" id="AT5G43600"/>
<dbReference type="TAIR" id="AT5G43600">
    <property type="gene designation" value="UAH"/>
</dbReference>
<dbReference type="eggNOG" id="ENOG502QPR4">
    <property type="taxonomic scope" value="Eukaryota"/>
</dbReference>
<dbReference type="HOGENOM" id="CLU_024588_6_0_1"/>
<dbReference type="InParanoid" id="Q8VXY9"/>
<dbReference type="OMA" id="IWPHGRW"/>
<dbReference type="OrthoDB" id="4676at2759"/>
<dbReference type="PhylomeDB" id="Q8VXY9"/>
<dbReference type="BioCyc" id="ARA:AT5G43600-MONOMER"/>
<dbReference type="BioCyc" id="MetaCyc:AT5G43600-MONOMER"/>
<dbReference type="BRENDA" id="3.5.1.116">
    <property type="organism ID" value="399"/>
</dbReference>
<dbReference type="UniPathway" id="UPA00395">
    <property type="reaction ID" value="UER00656"/>
</dbReference>
<dbReference type="EvolutionaryTrace" id="Q8VXY9"/>
<dbReference type="PRO" id="PR:Q8VXY9"/>
<dbReference type="Proteomes" id="UP000006548">
    <property type="component" value="Chromosome 5"/>
</dbReference>
<dbReference type="ExpressionAtlas" id="Q8VXY9">
    <property type="expression patterns" value="baseline and differential"/>
</dbReference>
<dbReference type="GO" id="GO:0005783">
    <property type="term" value="C:endoplasmic reticulum"/>
    <property type="evidence" value="ECO:0000314"/>
    <property type="project" value="TAIR"/>
</dbReference>
<dbReference type="GO" id="GO:0009536">
    <property type="term" value="C:plastid"/>
    <property type="evidence" value="ECO:0007005"/>
    <property type="project" value="TAIR"/>
</dbReference>
<dbReference type="GO" id="GO:0016813">
    <property type="term" value="F:hydrolase activity, acting on carbon-nitrogen (but not peptide) bonds, in linear amidines"/>
    <property type="evidence" value="ECO:0007669"/>
    <property type="project" value="InterPro"/>
</dbReference>
<dbReference type="GO" id="GO:0030145">
    <property type="term" value="F:manganese ion binding"/>
    <property type="evidence" value="ECO:0000314"/>
    <property type="project" value="UniProtKB"/>
</dbReference>
<dbReference type="GO" id="GO:0004848">
    <property type="term" value="F:ureidoglycolate hydrolase activity"/>
    <property type="evidence" value="ECO:0000314"/>
    <property type="project" value="UniProtKB"/>
</dbReference>
<dbReference type="GO" id="GO:0000256">
    <property type="term" value="P:allantoin catabolic process"/>
    <property type="evidence" value="ECO:0000314"/>
    <property type="project" value="TAIR"/>
</dbReference>
<dbReference type="GO" id="GO:0006145">
    <property type="term" value="P:purine nucleobase catabolic process"/>
    <property type="evidence" value="ECO:0000314"/>
    <property type="project" value="TAIR"/>
</dbReference>
<dbReference type="GO" id="GO:0010136">
    <property type="term" value="P:ureide catabolic process"/>
    <property type="evidence" value="ECO:0000314"/>
    <property type="project" value="TAIR"/>
</dbReference>
<dbReference type="CDD" id="cd03884">
    <property type="entry name" value="M20_bAS"/>
    <property type="match status" value="1"/>
</dbReference>
<dbReference type="FunFam" id="3.40.630.10:FF:000044">
    <property type="entry name" value="Allantoate amidohydrolase"/>
    <property type="match status" value="1"/>
</dbReference>
<dbReference type="FunFam" id="3.30.70.360:FF:000012">
    <property type="entry name" value="Putative ureidoglycolate hydrolase"/>
    <property type="match status" value="1"/>
</dbReference>
<dbReference type="Gene3D" id="3.30.70.360">
    <property type="match status" value="1"/>
</dbReference>
<dbReference type="Gene3D" id="3.40.630.10">
    <property type="entry name" value="Zn peptidases"/>
    <property type="match status" value="1"/>
</dbReference>
<dbReference type="InterPro" id="IPR010158">
    <property type="entry name" value="Amidase_Cbmase"/>
</dbReference>
<dbReference type="InterPro" id="IPR036264">
    <property type="entry name" value="Bact_exopeptidase_dim_dom"/>
</dbReference>
<dbReference type="InterPro" id="IPR002933">
    <property type="entry name" value="Peptidase_M20"/>
</dbReference>
<dbReference type="NCBIfam" id="TIGR01879">
    <property type="entry name" value="hydantase"/>
    <property type="match status" value="1"/>
</dbReference>
<dbReference type="PANTHER" id="PTHR32494">
    <property type="entry name" value="ALLANTOATE DEIMINASE-RELATED"/>
    <property type="match status" value="1"/>
</dbReference>
<dbReference type="PANTHER" id="PTHR32494:SF19">
    <property type="entry name" value="ALLANTOATE DEIMINASE-RELATED"/>
    <property type="match status" value="1"/>
</dbReference>
<dbReference type="Pfam" id="PF01546">
    <property type="entry name" value="Peptidase_M20"/>
    <property type="match status" value="1"/>
</dbReference>
<dbReference type="SUPFAM" id="SSF55031">
    <property type="entry name" value="Bacterial exopeptidase dimerisation domain"/>
    <property type="match status" value="1"/>
</dbReference>
<dbReference type="SUPFAM" id="SSF53187">
    <property type="entry name" value="Zn-dependent exopeptidases"/>
    <property type="match status" value="1"/>
</dbReference>
<name>UAH_ARATH</name>
<keyword id="KW-0002">3D-structure</keyword>
<keyword id="KW-0256">Endoplasmic reticulum</keyword>
<keyword id="KW-0378">Hydrolase</keyword>
<keyword id="KW-0464">Manganese</keyword>
<keyword id="KW-0479">Metal-binding</keyword>
<keyword id="KW-0659">Purine metabolism</keyword>
<keyword id="KW-1185">Reference proteome</keyword>
<keyword id="KW-0732">Signal</keyword>
<evidence type="ECO:0000250" key="1">
    <source>
        <dbReference type="UniProtKB" id="Q53389"/>
    </source>
</evidence>
<evidence type="ECO:0000255" key="2"/>
<evidence type="ECO:0000269" key="3">
    <source>
    </source>
</evidence>
<evidence type="ECO:0000269" key="4">
    <source>
    </source>
</evidence>
<evidence type="ECO:0000269" key="5">
    <source>
    </source>
</evidence>
<evidence type="ECO:0000303" key="6">
    <source>
    </source>
</evidence>
<evidence type="ECO:0000303" key="7">
    <source>
    </source>
</evidence>
<evidence type="ECO:0000305" key="8"/>
<evidence type="ECO:0000305" key="9">
    <source>
    </source>
</evidence>
<evidence type="ECO:0000312" key="10">
    <source>
        <dbReference type="Araport" id="AT5G43600"/>
    </source>
</evidence>
<evidence type="ECO:0000312" key="11">
    <source>
        <dbReference type="EMBL" id="BAB11623.1"/>
    </source>
</evidence>
<evidence type="ECO:0007744" key="12">
    <source>
        <dbReference type="PDB" id="4PXB"/>
    </source>
</evidence>
<evidence type="ECO:0007744" key="13">
    <source>
        <dbReference type="PDB" id="4PXC"/>
    </source>
</evidence>
<evidence type="ECO:0007744" key="14">
    <source>
        <dbReference type="PDB" id="4PXE"/>
    </source>
</evidence>
<evidence type="ECO:0007829" key="15">
    <source>
        <dbReference type="PDB" id="4PXE"/>
    </source>
</evidence>